<reference key="1">
    <citation type="journal article" date="2009" name="Genome Res.">
        <title>Newly introduced genomic prophage islands are critical determinants of in vivo competitiveness in the Liverpool epidemic strain of Pseudomonas aeruginosa.</title>
        <authorList>
            <person name="Winstanley C."/>
            <person name="Langille M.G.I."/>
            <person name="Fothergill J.L."/>
            <person name="Kukavica-Ibrulj I."/>
            <person name="Paradis-Bleau C."/>
            <person name="Sanschagrin F."/>
            <person name="Thomson N.R."/>
            <person name="Winsor G.L."/>
            <person name="Quail M.A."/>
            <person name="Lennard N."/>
            <person name="Bignell A."/>
            <person name="Clarke L."/>
            <person name="Seeger K."/>
            <person name="Saunders D."/>
            <person name="Harris D."/>
            <person name="Parkhill J."/>
            <person name="Hancock R.E.W."/>
            <person name="Brinkman F.S.L."/>
            <person name="Levesque R.C."/>
        </authorList>
    </citation>
    <scope>NUCLEOTIDE SEQUENCE [LARGE SCALE GENOMIC DNA]</scope>
    <source>
        <strain>LESB58</strain>
    </source>
</reference>
<organism>
    <name type="scientific">Pseudomonas aeruginosa (strain LESB58)</name>
    <dbReference type="NCBI Taxonomy" id="557722"/>
    <lineage>
        <taxon>Bacteria</taxon>
        <taxon>Pseudomonadati</taxon>
        <taxon>Pseudomonadota</taxon>
        <taxon>Gammaproteobacteria</taxon>
        <taxon>Pseudomonadales</taxon>
        <taxon>Pseudomonadaceae</taxon>
        <taxon>Pseudomonas</taxon>
    </lineage>
</organism>
<name>MOBA_PSEA8</name>
<proteinExistence type="inferred from homology"/>
<protein>
    <recommendedName>
        <fullName evidence="1">Molybdenum cofactor guanylyltransferase</fullName>
        <shortName evidence="1">MoCo guanylyltransferase</shortName>
        <ecNumber evidence="1">2.7.7.77</ecNumber>
    </recommendedName>
    <alternativeName>
        <fullName evidence="1">GTP:molybdopterin guanylyltransferase</fullName>
    </alternativeName>
    <alternativeName>
        <fullName evidence="1">Mo-MPT guanylyltransferase</fullName>
    </alternativeName>
    <alternativeName>
        <fullName evidence="1">Molybdopterin guanylyltransferase</fullName>
    </alternativeName>
    <alternativeName>
        <fullName evidence="1">Molybdopterin-guanine dinucleotide synthase</fullName>
        <shortName evidence="1">MGD synthase</shortName>
    </alternativeName>
</protein>
<dbReference type="EC" id="2.7.7.77" evidence="1"/>
<dbReference type="EMBL" id="FM209186">
    <property type="protein sequence ID" value="CAW26758.1"/>
    <property type="molecule type" value="Genomic_DNA"/>
</dbReference>
<dbReference type="RefSeq" id="WP_003109495.1">
    <property type="nucleotide sequence ID" value="NC_011770.1"/>
</dbReference>
<dbReference type="SMR" id="B7UXN9"/>
<dbReference type="KEGG" id="pag:PLES_20301"/>
<dbReference type="HOGENOM" id="CLU_055597_5_1_6"/>
<dbReference type="GO" id="GO:0005737">
    <property type="term" value="C:cytoplasm"/>
    <property type="evidence" value="ECO:0007669"/>
    <property type="project" value="UniProtKB-SubCell"/>
</dbReference>
<dbReference type="GO" id="GO:0005525">
    <property type="term" value="F:GTP binding"/>
    <property type="evidence" value="ECO:0007669"/>
    <property type="project" value="UniProtKB-UniRule"/>
</dbReference>
<dbReference type="GO" id="GO:0046872">
    <property type="term" value="F:metal ion binding"/>
    <property type="evidence" value="ECO:0007669"/>
    <property type="project" value="UniProtKB-KW"/>
</dbReference>
<dbReference type="GO" id="GO:0061603">
    <property type="term" value="F:molybdenum cofactor guanylyltransferase activity"/>
    <property type="evidence" value="ECO:0007669"/>
    <property type="project" value="UniProtKB-EC"/>
</dbReference>
<dbReference type="GO" id="GO:1902758">
    <property type="term" value="P:bis(molybdopterin guanine dinucleotide)molybdenum biosynthetic process"/>
    <property type="evidence" value="ECO:0007669"/>
    <property type="project" value="TreeGrafter"/>
</dbReference>
<dbReference type="CDD" id="cd02503">
    <property type="entry name" value="MobA"/>
    <property type="match status" value="1"/>
</dbReference>
<dbReference type="Gene3D" id="3.90.550.10">
    <property type="entry name" value="Spore Coat Polysaccharide Biosynthesis Protein SpsA, Chain A"/>
    <property type="match status" value="1"/>
</dbReference>
<dbReference type="HAMAP" id="MF_00316">
    <property type="entry name" value="MobA"/>
    <property type="match status" value="1"/>
</dbReference>
<dbReference type="InterPro" id="IPR025877">
    <property type="entry name" value="MobA-like_NTP_Trfase"/>
</dbReference>
<dbReference type="InterPro" id="IPR013482">
    <property type="entry name" value="Molybde_CF_guanTrfase"/>
</dbReference>
<dbReference type="InterPro" id="IPR029044">
    <property type="entry name" value="Nucleotide-diphossugar_trans"/>
</dbReference>
<dbReference type="NCBIfam" id="TIGR02665">
    <property type="entry name" value="molyb_mobA"/>
    <property type="match status" value="1"/>
</dbReference>
<dbReference type="PANTHER" id="PTHR19136">
    <property type="entry name" value="MOLYBDENUM COFACTOR GUANYLYLTRANSFERASE"/>
    <property type="match status" value="1"/>
</dbReference>
<dbReference type="PANTHER" id="PTHR19136:SF81">
    <property type="entry name" value="MOLYBDENUM COFACTOR GUANYLYLTRANSFERASE"/>
    <property type="match status" value="1"/>
</dbReference>
<dbReference type="Pfam" id="PF12804">
    <property type="entry name" value="NTP_transf_3"/>
    <property type="match status" value="1"/>
</dbReference>
<dbReference type="SUPFAM" id="SSF53448">
    <property type="entry name" value="Nucleotide-diphospho-sugar transferases"/>
    <property type="match status" value="1"/>
</dbReference>
<accession>B7UXN9</accession>
<comment type="function">
    <text evidence="1">Transfers a GMP moiety from GTP to Mo-molybdopterin (Mo-MPT) cofactor (Moco or molybdenum cofactor) to form Mo-molybdopterin guanine dinucleotide (Mo-MGD) cofactor.</text>
</comment>
<comment type="catalytic activity">
    <reaction evidence="1">
        <text>Mo-molybdopterin + GTP + H(+) = Mo-molybdopterin guanine dinucleotide + diphosphate</text>
        <dbReference type="Rhea" id="RHEA:34243"/>
        <dbReference type="ChEBI" id="CHEBI:15378"/>
        <dbReference type="ChEBI" id="CHEBI:33019"/>
        <dbReference type="ChEBI" id="CHEBI:37565"/>
        <dbReference type="ChEBI" id="CHEBI:71302"/>
        <dbReference type="ChEBI" id="CHEBI:71310"/>
        <dbReference type="EC" id="2.7.7.77"/>
    </reaction>
</comment>
<comment type="cofactor">
    <cofactor evidence="1">
        <name>Mg(2+)</name>
        <dbReference type="ChEBI" id="CHEBI:18420"/>
    </cofactor>
</comment>
<comment type="subunit">
    <text evidence="1">Monomer.</text>
</comment>
<comment type="subcellular location">
    <subcellularLocation>
        <location evidence="1">Cytoplasm</location>
    </subcellularLocation>
</comment>
<comment type="domain">
    <text evidence="1">The N-terminal domain determines nucleotide recognition and specific binding, while the C-terminal domain determines the specific binding to the target protein.</text>
</comment>
<comment type="similarity">
    <text evidence="1">Belongs to the MobA family.</text>
</comment>
<gene>
    <name evidence="1" type="primary">mobA</name>
    <name type="ordered locus">PLES_20301</name>
</gene>
<evidence type="ECO:0000255" key="1">
    <source>
        <dbReference type="HAMAP-Rule" id="MF_00316"/>
    </source>
</evidence>
<keyword id="KW-0963">Cytoplasm</keyword>
<keyword id="KW-0342">GTP-binding</keyword>
<keyword id="KW-0460">Magnesium</keyword>
<keyword id="KW-0479">Metal-binding</keyword>
<keyword id="KW-0501">Molybdenum cofactor biosynthesis</keyword>
<keyword id="KW-0547">Nucleotide-binding</keyword>
<keyword id="KW-0808">Transferase</keyword>
<sequence length="198" mass="21884">MPDSALPPCSILLLAGGRGQRMGGRDKGLIEWQGLPLIAHLHRLVRPLTDDLIVSCNRNQERYAAYADRLVSDDSRDFPGPLAGIRAGLAVARHPWLLVLPCDAPRIDRALLETLLQAAGRTPARPWMLRCGGQWEPLFSLIPTHLAEEIEHAWRQGDRSPRHVLLPLGAEAIELAAGDPRLANLNTPELLANHRELK</sequence>
<feature type="chain" id="PRO_1000119559" description="Molybdenum cofactor guanylyltransferase">
    <location>
        <begin position="1"/>
        <end position="198"/>
    </location>
</feature>
<feature type="binding site" evidence="1">
    <location>
        <begin position="14"/>
        <end position="16"/>
    </location>
    <ligand>
        <name>GTP</name>
        <dbReference type="ChEBI" id="CHEBI:37565"/>
    </ligand>
</feature>
<feature type="binding site" evidence="1">
    <location>
        <position position="27"/>
    </location>
    <ligand>
        <name>GTP</name>
        <dbReference type="ChEBI" id="CHEBI:37565"/>
    </ligand>
</feature>
<feature type="binding site" evidence="1">
    <location>
        <position position="73"/>
    </location>
    <ligand>
        <name>GTP</name>
        <dbReference type="ChEBI" id="CHEBI:37565"/>
    </ligand>
</feature>
<feature type="binding site" evidence="1">
    <location>
        <position position="103"/>
    </location>
    <ligand>
        <name>GTP</name>
        <dbReference type="ChEBI" id="CHEBI:37565"/>
    </ligand>
</feature>
<feature type="binding site" evidence="1">
    <location>
        <position position="103"/>
    </location>
    <ligand>
        <name>Mg(2+)</name>
        <dbReference type="ChEBI" id="CHEBI:18420"/>
    </ligand>
</feature>